<comment type="function">
    <text evidence="1">Catalyzes the ATP-dependent amination of UTP to CTP with either L-glutamine or ammonia as the source of nitrogen. Regulates intracellular CTP levels through interactions with the four ribonucleotide triphosphates.</text>
</comment>
<comment type="catalytic activity">
    <reaction evidence="1">
        <text>UTP + L-glutamine + ATP + H2O = CTP + L-glutamate + ADP + phosphate + 2 H(+)</text>
        <dbReference type="Rhea" id="RHEA:26426"/>
        <dbReference type="ChEBI" id="CHEBI:15377"/>
        <dbReference type="ChEBI" id="CHEBI:15378"/>
        <dbReference type="ChEBI" id="CHEBI:29985"/>
        <dbReference type="ChEBI" id="CHEBI:30616"/>
        <dbReference type="ChEBI" id="CHEBI:37563"/>
        <dbReference type="ChEBI" id="CHEBI:43474"/>
        <dbReference type="ChEBI" id="CHEBI:46398"/>
        <dbReference type="ChEBI" id="CHEBI:58359"/>
        <dbReference type="ChEBI" id="CHEBI:456216"/>
        <dbReference type="EC" id="6.3.4.2"/>
    </reaction>
</comment>
<comment type="catalytic activity">
    <reaction evidence="1">
        <text>L-glutamine + H2O = L-glutamate + NH4(+)</text>
        <dbReference type="Rhea" id="RHEA:15889"/>
        <dbReference type="ChEBI" id="CHEBI:15377"/>
        <dbReference type="ChEBI" id="CHEBI:28938"/>
        <dbReference type="ChEBI" id="CHEBI:29985"/>
        <dbReference type="ChEBI" id="CHEBI:58359"/>
    </reaction>
</comment>
<comment type="catalytic activity">
    <reaction evidence="1">
        <text>UTP + NH4(+) + ATP = CTP + ADP + phosphate + 2 H(+)</text>
        <dbReference type="Rhea" id="RHEA:16597"/>
        <dbReference type="ChEBI" id="CHEBI:15378"/>
        <dbReference type="ChEBI" id="CHEBI:28938"/>
        <dbReference type="ChEBI" id="CHEBI:30616"/>
        <dbReference type="ChEBI" id="CHEBI:37563"/>
        <dbReference type="ChEBI" id="CHEBI:43474"/>
        <dbReference type="ChEBI" id="CHEBI:46398"/>
        <dbReference type="ChEBI" id="CHEBI:456216"/>
    </reaction>
</comment>
<comment type="activity regulation">
    <text evidence="1">Allosterically activated by GTP, when glutamine is the substrate; GTP has no effect on the reaction when ammonia is the substrate. The allosteric effector GTP functions by stabilizing the protein conformation that binds the tetrahedral intermediate(s) formed during glutamine hydrolysis. Inhibited by the product CTP, via allosteric rather than competitive inhibition.</text>
</comment>
<comment type="pathway">
    <text evidence="1">Pyrimidine metabolism; CTP biosynthesis via de novo pathway; CTP from UDP: step 2/2.</text>
</comment>
<comment type="subunit">
    <text evidence="1">Homotetramer.</text>
</comment>
<comment type="miscellaneous">
    <text evidence="1">CTPSs have evolved a hybrid strategy for distinguishing between UTP and CTP. The overlapping regions of the product feedback inhibitory and substrate sites recognize a common feature in both compounds, the triphosphate moiety. To differentiate isosteric substrate and product pyrimidine rings, an additional pocket far from the expected kinase/ligase catalytic site, specifically recognizes the cytosine and ribose portions of the product inhibitor.</text>
</comment>
<comment type="similarity">
    <text evidence="1">Belongs to the CTP synthase family.</text>
</comment>
<evidence type="ECO:0000255" key="1">
    <source>
        <dbReference type="HAMAP-Rule" id="MF_01227"/>
    </source>
</evidence>
<dbReference type="EC" id="6.3.4.2" evidence="1"/>
<dbReference type="EMBL" id="BA000016">
    <property type="protein sequence ID" value="BAB81914.1"/>
    <property type="molecule type" value="Genomic_DNA"/>
</dbReference>
<dbReference type="RefSeq" id="WP_003452392.1">
    <property type="nucleotide sequence ID" value="NC_003366.1"/>
</dbReference>
<dbReference type="SMR" id="Q8XIB3"/>
<dbReference type="STRING" id="195102.gene:10491487"/>
<dbReference type="KEGG" id="cpe:CPE2208"/>
<dbReference type="HOGENOM" id="CLU_011675_5_0_9"/>
<dbReference type="UniPathway" id="UPA00159">
    <property type="reaction ID" value="UER00277"/>
</dbReference>
<dbReference type="Proteomes" id="UP000000818">
    <property type="component" value="Chromosome"/>
</dbReference>
<dbReference type="GO" id="GO:0005829">
    <property type="term" value="C:cytosol"/>
    <property type="evidence" value="ECO:0007669"/>
    <property type="project" value="TreeGrafter"/>
</dbReference>
<dbReference type="GO" id="GO:0005524">
    <property type="term" value="F:ATP binding"/>
    <property type="evidence" value="ECO:0007669"/>
    <property type="project" value="UniProtKB-KW"/>
</dbReference>
<dbReference type="GO" id="GO:0003883">
    <property type="term" value="F:CTP synthase activity"/>
    <property type="evidence" value="ECO:0007669"/>
    <property type="project" value="UniProtKB-UniRule"/>
</dbReference>
<dbReference type="GO" id="GO:0004359">
    <property type="term" value="F:glutaminase activity"/>
    <property type="evidence" value="ECO:0007669"/>
    <property type="project" value="RHEA"/>
</dbReference>
<dbReference type="GO" id="GO:0042802">
    <property type="term" value="F:identical protein binding"/>
    <property type="evidence" value="ECO:0007669"/>
    <property type="project" value="TreeGrafter"/>
</dbReference>
<dbReference type="GO" id="GO:0046872">
    <property type="term" value="F:metal ion binding"/>
    <property type="evidence" value="ECO:0007669"/>
    <property type="project" value="UniProtKB-KW"/>
</dbReference>
<dbReference type="GO" id="GO:0044210">
    <property type="term" value="P:'de novo' CTP biosynthetic process"/>
    <property type="evidence" value="ECO:0007669"/>
    <property type="project" value="UniProtKB-UniRule"/>
</dbReference>
<dbReference type="GO" id="GO:0019856">
    <property type="term" value="P:pyrimidine nucleobase biosynthetic process"/>
    <property type="evidence" value="ECO:0007669"/>
    <property type="project" value="TreeGrafter"/>
</dbReference>
<dbReference type="CDD" id="cd03113">
    <property type="entry name" value="CTPS_N"/>
    <property type="match status" value="1"/>
</dbReference>
<dbReference type="CDD" id="cd01746">
    <property type="entry name" value="GATase1_CTP_Synthase"/>
    <property type="match status" value="1"/>
</dbReference>
<dbReference type="FunFam" id="3.40.50.300:FF:000009">
    <property type="entry name" value="CTP synthase"/>
    <property type="match status" value="1"/>
</dbReference>
<dbReference type="FunFam" id="3.40.50.880:FF:000002">
    <property type="entry name" value="CTP synthase"/>
    <property type="match status" value="1"/>
</dbReference>
<dbReference type="Gene3D" id="3.40.50.880">
    <property type="match status" value="1"/>
</dbReference>
<dbReference type="Gene3D" id="3.40.50.300">
    <property type="entry name" value="P-loop containing nucleotide triphosphate hydrolases"/>
    <property type="match status" value="1"/>
</dbReference>
<dbReference type="HAMAP" id="MF_01227">
    <property type="entry name" value="PyrG"/>
    <property type="match status" value="1"/>
</dbReference>
<dbReference type="InterPro" id="IPR029062">
    <property type="entry name" value="Class_I_gatase-like"/>
</dbReference>
<dbReference type="InterPro" id="IPR004468">
    <property type="entry name" value="CTP_synthase"/>
</dbReference>
<dbReference type="InterPro" id="IPR017456">
    <property type="entry name" value="CTP_synthase_N"/>
</dbReference>
<dbReference type="InterPro" id="IPR017926">
    <property type="entry name" value="GATASE"/>
</dbReference>
<dbReference type="InterPro" id="IPR033828">
    <property type="entry name" value="GATase1_CTP_Synthase"/>
</dbReference>
<dbReference type="InterPro" id="IPR027417">
    <property type="entry name" value="P-loop_NTPase"/>
</dbReference>
<dbReference type="NCBIfam" id="NF003792">
    <property type="entry name" value="PRK05380.1"/>
    <property type="match status" value="1"/>
</dbReference>
<dbReference type="NCBIfam" id="TIGR00337">
    <property type="entry name" value="PyrG"/>
    <property type="match status" value="1"/>
</dbReference>
<dbReference type="PANTHER" id="PTHR11550">
    <property type="entry name" value="CTP SYNTHASE"/>
    <property type="match status" value="1"/>
</dbReference>
<dbReference type="PANTHER" id="PTHR11550:SF0">
    <property type="entry name" value="CTP SYNTHASE-RELATED"/>
    <property type="match status" value="1"/>
</dbReference>
<dbReference type="Pfam" id="PF06418">
    <property type="entry name" value="CTP_synth_N"/>
    <property type="match status" value="1"/>
</dbReference>
<dbReference type="Pfam" id="PF00117">
    <property type="entry name" value="GATase"/>
    <property type="match status" value="1"/>
</dbReference>
<dbReference type="SUPFAM" id="SSF52317">
    <property type="entry name" value="Class I glutamine amidotransferase-like"/>
    <property type="match status" value="1"/>
</dbReference>
<dbReference type="SUPFAM" id="SSF52540">
    <property type="entry name" value="P-loop containing nucleoside triphosphate hydrolases"/>
    <property type="match status" value="1"/>
</dbReference>
<dbReference type="PROSITE" id="PS51273">
    <property type="entry name" value="GATASE_TYPE_1"/>
    <property type="match status" value="1"/>
</dbReference>
<name>PYRG_CLOPE</name>
<sequence length="535" mass="59656">MSKNTKYVFVTGGVVSSLGKGITAASLGRLLKNRGLSVSIQKFDPYLNIDPGTMSPYQHGEVFVTDDGAETDLDLGHYERFIDENLTQNSNVTSGRVYWSVISKERKGEYLGGTVQVIPHITNAIKDRVHRVGKERDVDVVITEIGGTIGDIESLPFLEAIRQIKYDVGKENVCFIHVTLVPYLGKAGELKTKPTQHSVKELRSIGIQPDIIVCRSEKELSEDIKKKIGLFCNIDASEVIQNLDAEHLYAVPLMLHKEGLDRLVCEKLGLGCRDIDNAEWIDMVHRITHLTHTTKIALVGKYVELHDAYISVVEALNHGGLSNDTNVEIEWINAEDVTKENVDELLSGVDGVLVPGGFGDRGVEGKIEAIRWARENKKPFLGICLGMQCAVIEYARNVLGLEGAHSSELNPETPFPVIDLMPEQKDVEDLGGTMRLGLYPCKLEDNTFCKDVYASDLIYERHRHRYEFNNEYRTQLIESGLTIAGTSPDGRLVECVEVKDHPWFVAVQYHPELKSRPNRPHPLFVGFVGAALNNK</sequence>
<protein>
    <recommendedName>
        <fullName evidence="1">CTP synthase</fullName>
        <ecNumber evidence="1">6.3.4.2</ecNumber>
    </recommendedName>
    <alternativeName>
        <fullName evidence="1">Cytidine 5'-triphosphate synthase</fullName>
    </alternativeName>
    <alternativeName>
        <fullName evidence="1">Cytidine triphosphate synthetase</fullName>
        <shortName evidence="1">CTP synthetase</shortName>
        <shortName evidence="1">CTPS</shortName>
    </alternativeName>
    <alternativeName>
        <fullName evidence="1">UTP--ammonia ligase</fullName>
    </alternativeName>
</protein>
<proteinExistence type="inferred from homology"/>
<accession>Q8XIB3</accession>
<organism>
    <name type="scientific">Clostridium perfringens (strain 13 / Type A)</name>
    <dbReference type="NCBI Taxonomy" id="195102"/>
    <lineage>
        <taxon>Bacteria</taxon>
        <taxon>Bacillati</taxon>
        <taxon>Bacillota</taxon>
        <taxon>Clostridia</taxon>
        <taxon>Eubacteriales</taxon>
        <taxon>Clostridiaceae</taxon>
        <taxon>Clostridium</taxon>
    </lineage>
</organism>
<keyword id="KW-0067">ATP-binding</keyword>
<keyword id="KW-0315">Glutamine amidotransferase</keyword>
<keyword id="KW-0436">Ligase</keyword>
<keyword id="KW-0460">Magnesium</keyword>
<keyword id="KW-0479">Metal-binding</keyword>
<keyword id="KW-0547">Nucleotide-binding</keyword>
<keyword id="KW-0665">Pyrimidine biosynthesis</keyword>
<keyword id="KW-1185">Reference proteome</keyword>
<gene>
    <name evidence="1" type="primary">pyrG</name>
    <name type="synonym">ctrA</name>
    <name type="ordered locus">CPE2208</name>
</gene>
<feature type="chain" id="PRO_0000138180" description="CTP synthase">
    <location>
        <begin position="1"/>
        <end position="535"/>
    </location>
</feature>
<feature type="domain" description="Glutamine amidotransferase type-1" evidence="1">
    <location>
        <begin position="295"/>
        <end position="535"/>
    </location>
</feature>
<feature type="region of interest" description="Amidoligase domain" evidence="1">
    <location>
        <begin position="1"/>
        <end position="270"/>
    </location>
</feature>
<feature type="active site" description="Nucleophile; for glutamine hydrolysis" evidence="1">
    <location>
        <position position="384"/>
    </location>
</feature>
<feature type="active site" evidence="1">
    <location>
        <position position="510"/>
    </location>
</feature>
<feature type="active site" evidence="1">
    <location>
        <position position="512"/>
    </location>
</feature>
<feature type="binding site" evidence="1">
    <location>
        <position position="16"/>
    </location>
    <ligand>
        <name>CTP</name>
        <dbReference type="ChEBI" id="CHEBI:37563"/>
        <note>allosteric inhibitor</note>
    </ligand>
</feature>
<feature type="binding site" evidence="1">
    <location>
        <position position="16"/>
    </location>
    <ligand>
        <name>UTP</name>
        <dbReference type="ChEBI" id="CHEBI:46398"/>
    </ligand>
</feature>
<feature type="binding site" evidence="1">
    <location>
        <begin position="17"/>
        <end position="22"/>
    </location>
    <ligand>
        <name>ATP</name>
        <dbReference type="ChEBI" id="CHEBI:30616"/>
    </ligand>
</feature>
<feature type="binding site" evidence="1">
    <location>
        <position position="57"/>
    </location>
    <ligand>
        <name>L-glutamine</name>
        <dbReference type="ChEBI" id="CHEBI:58359"/>
    </ligand>
</feature>
<feature type="binding site" evidence="1">
    <location>
        <position position="74"/>
    </location>
    <ligand>
        <name>ATP</name>
        <dbReference type="ChEBI" id="CHEBI:30616"/>
    </ligand>
</feature>
<feature type="binding site" evidence="1">
    <location>
        <position position="74"/>
    </location>
    <ligand>
        <name>Mg(2+)</name>
        <dbReference type="ChEBI" id="CHEBI:18420"/>
    </ligand>
</feature>
<feature type="binding site" evidence="1">
    <location>
        <position position="144"/>
    </location>
    <ligand>
        <name>Mg(2+)</name>
        <dbReference type="ChEBI" id="CHEBI:18420"/>
    </ligand>
</feature>
<feature type="binding site" evidence="1">
    <location>
        <begin position="151"/>
        <end position="153"/>
    </location>
    <ligand>
        <name>CTP</name>
        <dbReference type="ChEBI" id="CHEBI:37563"/>
        <note>allosteric inhibitor</note>
    </ligand>
</feature>
<feature type="binding site" evidence="1">
    <location>
        <begin position="191"/>
        <end position="196"/>
    </location>
    <ligand>
        <name>CTP</name>
        <dbReference type="ChEBI" id="CHEBI:37563"/>
        <note>allosteric inhibitor</note>
    </ligand>
</feature>
<feature type="binding site" evidence="1">
    <location>
        <begin position="191"/>
        <end position="196"/>
    </location>
    <ligand>
        <name>UTP</name>
        <dbReference type="ChEBI" id="CHEBI:46398"/>
    </ligand>
</feature>
<feature type="binding site" evidence="1">
    <location>
        <position position="227"/>
    </location>
    <ligand>
        <name>CTP</name>
        <dbReference type="ChEBI" id="CHEBI:37563"/>
        <note>allosteric inhibitor</note>
    </ligand>
</feature>
<feature type="binding site" evidence="1">
    <location>
        <position position="227"/>
    </location>
    <ligand>
        <name>UTP</name>
        <dbReference type="ChEBI" id="CHEBI:46398"/>
    </ligand>
</feature>
<feature type="binding site" evidence="1">
    <location>
        <position position="357"/>
    </location>
    <ligand>
        <name>L-glutamine</name>
        <dbReference type="ChEBI" id="CHEBI:58359"/>
    </ligand>
</feature>
<feature type="binding site" evidence="1">
    <location>
        <begin position="385"/>
        <end position="388"/>
    </location>
    <ligand>
        <name>L-glutamine</name>
        <dbReference type="ChEBI" id="CHEBI:58359"/>
    </ligand>
</feature>
<feature type="binding site" evidence="1">
    <location>
        <position position="408"/>
    </location>
    <ligand>
        <name>L-glutamine</name>
        <dbReference type="ChEBI" id="CHEBI:58359"/>
    </ligand>
</feature>
<feature type="binding site" evidence="1">
    <location>
        <position position="465"/>
    </location>
    <ligand>
        <name>L-glutamine</name>
        <dbReference type="ChEBI" id="CHEBI:58359"/>
    </ligand>
</feature>
<reference key="1">
    <citation type="journal article" date="2002" name="Proc. Natl. Acad. Sci. U.S.A.">
        <title>Complete genome sequence of Clostridium perfringens, an anaerobic flesh-eater.</title>
        <authorList>
            <person name="Shimizu T."/>
            <person name="Ohtani K."/>
            <person name="Hirakawa H."/>
            <person name="Ohshima K."/>
            <person name="Yamashita A."/>
            <person name="Shiba T."/>
            <person name="Ogasawara N."/>
            <person name="Hattori M."/>
            <person name="Kuhara S."/>
            <person name="Hayashi H."/>
        </authorList>
    </citation>
    <scope>NUCLEOTIDE SEQUENCE [LARGE SCALE GENOMIC DNA]</scope>
    <source>
        <strain>13 / Type A</strain>
    </source>
</reference>